<sequence>MTTPSAELPALARIRDDVRAMQAYVVADATGYLKMDAMENPFGLPPALQAALGQRLGQLALNRYPGTRQNDLKAALAAYAGAPAGSAVLLGNGSDELISLVALACARAQATVLAPVPGFVMYAMSAQLQGLGFVGVPLTADFELDEAAMLAAIAQHRPAITFLAYPNNPTATLWDEAVVQRIIDAAGAQGGIVVMDEAYQPFASRSWIERMRAQPERNGHVLLMRTLSKFGLAGVRLGYMIGPAALVAEVDKVRPPYNVSVLNTEAALFALEHADVFAAQADELRAARTELLAALRAMPGIERVWDSQANMVLVRVPDAARAYEGMKARKVLVKNVSTMHPLLAGCLRLTVGSSADNAQMLTALQASL</sequence>
<dbReference type="EC" id="2.6.1.9" evidence="1"/>
<dbReference type="EMBL" id="CP000539">
    <property type="protein sequence ID" value="ABM41006.1"/>
    <property type="molecule type" value="Genomic_DNA"/>
</dbReference>
<dbReference type="SMR" id="A1W431"/>
<dbReference type="STRING" id="232721.Ajs_0762"/>
<dbReference type="KEGG" id="ajs:Ajs_0762"/>
<dbReference type="eggNOG" id="COG0079">
    <property type="taxonomic scope" value="Bacteria"/>
</dbReference>
<dbReference type="HOGENOM" id="CLU_017584_3_1_4"/>
<dbReference type="UniPathway" id="UPA00031">
    <property type="reaction ID" value="UER00012"/>
</dbReference>
<dbReference type="Proteomes" id="UP000000645">
    <property type="component" value="Chromosome"/>
</dbReference>
<dbReference type="GO" id="GO:0004400">
    <property type="term" value="F:histidinol-phosphate transaminase activity"/>
    <property type="evidence" value="ECO:0007669"/>
    <property type="project" value="UniProtKB-UniRule"/>
</dbReference>
<dbReference type="GO" id="GO:0030170">
    <property type="term" value="F:pyridoxal phosphate binding"/>
    <property type="evidence" value="ECO:0007669"/>
    <property type="project" value="InterPro"/>
</dbReference>
<dbReference type="GO" id="GO:0000105">
    <property type="term" value="P:L-histidine biosynthetic process"/>
    <property type="evidence" value="ECO:0007669"/>
    <property type="project" value="UniProtKB-UniRule"/>
</dbReference>
<dbReference type="CDD" id="cd00609">
    <property type="entry name" value="AAT_like"/>
    <property type="match status" value="1"/>
</dbReference>
<dbReference type="Gene3D" id="3.90.1150.10">
    <property type="entry name" value="Aspartate Aminotransferase, domain 1"/>
    <property type="match status" value="1"/>
</dbReference>
<dbReference type="Gene3D" id="3.40.640.10">
    <property type="entry name" value="Type I PLP-dependent aspartate aminotransferase-like (Major domain)"/>
    <property type="match status" value="1"/>
</dbReference>
<dbReference type="HAMAP" id="MF_01023">
    <property type="entry name" value="HisC_aminotrans_2"/>
    <property type="match status" value="1"/>
</dbReference>
<dbReference type="InterPro" id="IPR004839">
    <property type="entry name" value="Aminotransferase_I/II_large"/>
</dbReference>
<dbReference type="InterPro" id="IPR005861">
    <property type="entry name" value="HisP_aminotrans"/>
</dbReference>
<dbReference type="InterPro" id="IPR015424">
    <property type="entry name" value="PyrdxlP-dep_Trfase"/>
</dbReference>
<dbReference type="InterPro" id="IPR015421">
    <property type="entry name" value="PyrdxlP-dep_Trfase_major"/>
</dbReference>
<dbReference type="InterPro" id="IPR015422">
    <property type="entry name" value="PyrdxlP-dep_Trfase_small"/>
</dbReference>
<dbReference type="NCBIfam" id="TIGR01141">
    <property type="entry name" value="hisC"/>
    <property type="match status" value="1"/>
</dbReference>
<dbReference type="PANTHER" id="PTHR42885:SF2">
    <property type="entry name" value="HISTIDINOL-PHOSPHATE AMINOTRANSFERASE"/>
    <property type="match status" value="1"/>
</dbReference>
<dbReference type="PANTHER" id="PTHR42885">
    <property type="entry name" value="HISTIDINOL-PHOSPHATE AMINOTRANSFERASE-RELATED"/>
    <property type="match status" value="1"/>
</dbReference>
<dbReference type="Pfam" id="PF00155">
    <property type="entry name" value="Aminotran_1_2"/>
    <property type="match status" value="1"/>
</dbReference>
<dbReference type="SUPFAM" id="SSF53383">
    <property type="entry name" value="PLP-dependent transferases"/>
    <property type="match status" value="1"/>
</dbReference>
<proteinExistence type="inferred from homology"/>
<accession>A1W431</accession>
<organism>
    <name type="scientific">Acidovorax sp. (strain JS42)</name>
    <dbReference type="NCBI Taxonomy" id="232721"/>
    <lineage>
        <taxon>Bacteria</taxon>
        <taxon>Pseudomonadati</taxon>
        <taxon>Pseudomonadota</taxon>
        <taxon>Betaproteobacteria</taxon>
        <taxon>Burkholderiales</taxon>
        <taxon>Comamonadaceae</taxon>
        <taxon>Acidovorax</taxon>
    </lineage>
</organism>
<protein>
    <recommendedName>
        <fullName evidence="1">Histidinol-phosphate aminotransferase</fullName>
        <ecNumber evidence="1">2.6.1.9</ecNumber>
    </recommendedName>
    <alternativeName>
        <fullName evidence="1">Imidazole acetol-phosphate transaminase</fullName>
    </alternativeName>
</protein>
<gene>
    <name evidence="1" type="primary">hisC</name>
    <name type="ordered locus">Ajs_0762</name>
</gene>
<name>HIS8_ACISJ</name>
<keyword id="KW-0028">Amino-acid biosynthesis</keyword>
<keyword id="KW-0032">Aminotransferase</keyword>
<keyword id="KW-0368">Histidine biosynthesis</keyword>
<keyword id="KW-0663">Pyridoxal phosphate</keyword>
<keyword id="KW-0808">Transferase</keyword>
<evidence type="ECO:0000255" key="1">
    <source>
        <dbReference type="HAMAP-Rule" id="MF_01023"/>
    </source>
</evidence>
<comment type="catalytic activity">
    <reaction evidence="1">
        <text>L-histidinol phosphate + 2-oxoglutarate = 3-(imidazol-4-yl)-2-oxopropyl phosphate + L-glutamate</text>
        <dbReference type="Rhea" id="RHEA:23744"/>
        <dbReference type="ChEBI" id="CHEBI:16810"/>
        <dbReference type="ChEBI" id="CHEBI:29985"/>
        <dbReference type="ChEBI" id="CHEBI:57766"/>
        <dbReference type="ChEBI" id="CHEBI:57980"/>
        <dbReference type="EC" id="2.6.1.9"/>
    </reaction>
</comment>
<comment type="cofactor">
    <cofactor evidence="1">
        <name>pyridoxal 5'-phosphate</name>
        <dbReference type="ChEBI" id="CHEBI:597326"/>
    </cofactor>
</comment>
<comment type="pathway">
    <text evidence="1">Amino-acid biosynthesis; L-histidine biosynthesis; L-histidine from 5-phospho-alpha-D-ribose 1-diphosphate: step 7/9.</text>
</comment>
<comment type="subunit">
    <text evidence="1">Homodimer.</text>
</comment>
<comment type="similarity">
    <text evidence="1">Belongs to the class-II pyridoxal-phosphate-dependent aminotransferase family. Histidinol-phosphate aminotransferase subfamily.</text>
</comment>
<feature type="chain" id="PRO_0000319740" description="Histidinol-phosphate aminotransferase">
    <location>
        <begin position="1"/>
        <end position="368"/>
    </location>
</feature>
<feature type="modified residue" description="N6-(pyridoxal phosphate)lysine" evidence="1">
    <location>
        <position position="229"/>
    </location>
</feature>
<reference key="1">
    <citation type="submission" date="2006-12" db="EMBL/GenBank/DDBJ databases">
        <title>Complete sequence of chromosome 1 of Acidovorax sp. JS42.</title>
        <authorList>
            <person name="Copeland A."/>
            <person name="Lucas S."/>
            <person name="Lapidus A."/>
            <person name="Barry K."/>
            <person name="Detter J.C."/>
            <person name="Glavina del Rio T."/>
            <person name="Dalin E."/>
            <person name="Tice H."/>
            <person name="Pitluck S."/>
            <person name="Chertkov O."/>
            <person name="Brettin T."/>
            <person name="Bruce D."/>
            <person name="Han C."/>
            <person name="Tapia R."/>
            <person name="Gilna P."/>
            <person name="Schmutz J."/>
            <person name="Larimer F."/>
            <person name="Land M."/>
            <person name="Hauser L."/>
            <person name="Kyrpides N."/>
            <person name="Kim E."/>
            <person name="Stahl D."/>
            <person name="Richardson P."/>
        </authorList>
    </citation>
    <scope>NUCLEOTIDE SEQUENCE [LARGE SCALE GENOMIC DNA]</scope>
    <source>
        <strain>JS42</strain>
    </source>
</reference>